<comment type="function">
    <text evidence="2 8 12 14 15">Part of a multiprotein signaling complex which promotes phosphorylation of Raf family members and activation of downstream MAP kinases (PubMed:10409742, PubMed:12932319, PubMed:21102438, PubMed:21441104). Independently of its kinase activity, acts as MAP2K1/MEK1 and MAP2K2/MEK2-dependent allosteric activator of BRAF; upon binding to MAP2K1/MEK1 or MAP2K2/MEK2, dimerizes with BRAF and promotes BRAF-mediated phosphorylation of MAP2K1/MEK1 and/or MAP2K2/MEK2 (By similarity). Promotes activation of MAPK1 and/or MAPK3, both in response to EGF and to cAMP (PubMed:21102438). Its kinase activity is unsure (PubMed:21441104). Some protein kinase activity has been detected in vitro, however the physiological relevance of this activity is unknown (PubMed:21441104).</text>
</comment>
<comment type="catalytic activity">
    <reaction evidence="15">
        <text>L-seryl-[protein] + ATP = O-phospho-L-seryl-[protein] + ADP + H(+)</text>
        <dbReference type="Rhea" id="RHEA:17989"/>
        <dbReference type="Rhea" id="RHEA-COMP:9863"/>
        <dbReference type="Rhea" id="RHEA-COMP:11604"/>
        <dbReference type="ChEBI" id="CHEBI:15378"/>
        <dbReference type="ChEBI" id="CHEBI:29999"/>
        <dbReference type="ChEBI" id="CHEBI:30616"/>
        <dbReference type="ChEBI" id="CHEBI:83421"/>
        <dbReference type="ChEBI" id="CHEBI:456216"/>
        <dbReference type="EC" id="2.7.11.1"/>
    </reaction>
</comment>
<comment type="catalytic activity">
    <reaction evidence="15">
        <text>L-threonyl-[protein] + ATP = O-phospho-L-threonyl-[protein] + ADP + H(+)</text>
        <dbReference type="Rhea" id="RHEA:46608"/>
        <dbReference type="Rhea" id="RHEA-COMP:11060"/>
        <dbReference type="Rhea" id="RHEA-COMP:11605"/>
        <dbReference type="ChEBI" id="CHEBI:15378"/>
        <dbReference type="ChEBI" id="CHEBI:30013"/>
        <dbReference type="ChEBI" id="CHEBI:30616"/>
        <dbReference type="ChEBI" id="CHEBI:61977"/>
        <dbReference type="ChEBI" id="CHEBI:456216"/>
        <dbReference type="EC" id="2.7.11.1"/>
    </reaction>
</comment>
<comment type="subunit">
    <text evidence="2 8 9 10 12 13 14 15 16">Homodimer (By similarity). Heterodimerizes (via N-terminus) with BRAF (via N-terminus) in a MAP2K1/MEK1 or MAP2K2/MEK2-dependent manner (By similarity). Interacts with MAP2K1/MEK1 and MAP2K2/MEK2 (PubMed:10409742, PubMed:10891492, PubMed:21441104). Binding to MAP2K1/MEK1 releases the intramolecular inhibitory interaction between KSR1 N-terminus and kinase domains which is required for the subsequent RSK1 dimerization with BRAF (By similarity). Identified in a complex with AKAP13, MAP2K1 and BRAF (PubMed:21102438, PubMed:23250398). Interacts with AKAP13 and BRAF (PubMed:21102438). Interacts with RAF and MAPK/ERK, in a Ras-dependent manner (PubMed:10891492). Interacts with 14-3-3 proteins including YWHAB (PubMed:10409742, PubMed:11741534). Interacts with HSP90AA1/HSP90, YWHAE/14-3-3 and CDC37 (PubMed:10409742). The binding of 14-3-3 proteins to phosphorylated KSR1 prevents the membrane localization (PubMed:10409742). Interacts with MARK3/C-TAK1 (PubMed:11741534, PubMed:12941695). Interacts with PPP2R1A and PPP2CA (PubMed:12932319). Interacts with VRK2 (By similarity).</text>
</comment>
<comment type="interaction">
    <interactant intactId="EBI-1536336">
        <id>Q61097</id>
    </interactant>
    <interactant intactId="EBI-772191">
        <id>Q60875</id>
        <label>Arhgef2</label>
    </interactant>
    <organismsDiffer>false</organismsDiffer>
    <experiments>5</experiments>
</comment>
<comment type="interaction">
    <interactant intactId="EBI-1536336">
        <id>Q61097</id>
    </interactant>
    <interactant intactId="EBI-365980">
        <id>P15056</id>
        <label>BRAF</label>
    </interactant>
    <organismsDiffer>true</organismsDiffer>
    <experiments>3</experiments>
</comment>
<comment type="interaction">
    <interactant intactId="EBI-1536336">
        <id>Q61097</id>
    </interactant>
    <interactant intactId="EBI-741141">
        <id>P15531</id>
        <label>NME1</label>
    </interactant>
    <organismsDiffer>true</organismsDiffer>
    <experiments>7</experiments>
</comment>
<comment type="interaction">
    <interactant intactId="EBI-1536336">
        <id>Q61097</id>
    </interactant>
    <interactant intactId="EBI-1207633">
        <id>Q86Y07-1</id>
        <label>VRK2</label>
    </interactant>
    <organismsDiffer>true</organismsDiffer>
    <experiments>8</experiments>
</comment>
<comment type="subcellular location">
    <subcellularLocation>
        <location evidence="8 10 12 13 16">Cytoplasm</location>
    </subcellularLocation>
    <subcellularLocation>
        <location evidence="8">Membrane</location>
        <topology evidence="8">Peripheral membrane protein</topology>
    </subcellularLocation>
    <subcellularLocation>
        <location evidence="10 12 16">Cell membrane</location>
        <topology evidence="10 12 16">Peripheral membrane protein</topology>
    </subcellularLocation>
    <subcellularLocation>
        <location evidence="16">Cell projection</location>
        <location evidence="16">Ruffle membrane</location>
    </subcellularLocation>
    <subcellularLocation>
        <location evidence="2">Endoplasmic reticulum membrane</location>
    </subcellularLocation>
    <text evidence="18">In unstimulated cells, where the phosphorylated form is bound to a 14-3-3 protein, sequestration in the cytoplasm occurs. Following growth factor treatment, the protein is free for membrane translocation, and it moves from the cytoplasm to the cell periphery.</text>
</comment>
<comment type="alternative products">
    <event type="alternative splicing"/>
    <isoform>
        <id>Q61097-1</id>
        <name>1</name>
        <sequence type="displayed"/>
    </isoform>
    <isoform>
        <id>Q61097-2</id>
        <name>2</name>
        <name>B-KSR1</name>
        <sequence type="described" ref="VSP_012232 VSP_012233"/>
    </isoform>
</comment>
<comment type="tissue specificity">
    <text evidence="9">Expressed in brain, spleen and testis. Isoform 1 is highly expressed spleen and weakly in testis, and isoform 2 is highly expressed in brain and weakly in testis.</text>
</comment>
<comment type="domain">
    <text evidence="3 8">The protein kinase domain is predicted to be catalytically inactive. The domain is sufficient for KSR1 and KSR1-mediated MAP2K1 and MAP2K2 membrane localization. The domain is required but not sufficient for MAP kinase-mediated inhibition of ELK1 phosphorylation (PubMed:10409742).</text>
</comment>
<comment type="domain">
    <text evidence="16">The N-terminal region mediates interaction with BRAF (PubMed:23250398). Also mediates membrane localization (PubMed:23250398).</text>
</comment>
<comment type="PTM">
    <text evidence="8 9 10 12 13 14 17">Phosphorylated on Ser-297 and, to a higher extent, on Ser-392 by MARK3 (PubMed:11741534, PubMed:12941695). Dephosphorylated on Ser-392 by PPP2CA (PubMed:12932319). Phosphorylated KSR1 is cytoplasmic and dephosphorylated KSR1 is membrane-associated (Probable). Phosphorylated by PKA at Ser-838. Phosphorylation at Ser-838 is required for cAMP-dependent activation of MAPK1 and/or MAPK3 (PubMed:21102438).</text>
</comment>
<comment type="similarity">
    <text evidence="17">Belongs to the protein kinase superfamily. TKL Ser/Thr protein kinase family.</text>
</comment>
<comment type="caution">
    <text evidence="15 17">Although it belongs to the protein kinase superfamily, the ATP-binding motif VAIK has an arginine instead of a lysine residue suggesting that KSR1 cannot bind ATP and therefore lacks protein kinase activity. However, KSR1 is capable of binding ATP (PubMed:21441104). Has protein kinase activity towards MAP2K1 in presence of RAF1/c-RAF in vitro (PubMed:21441104).</text>
</comment>
<reference key="1">
    <citation type="journal article" date="1995" name="Cell">
        <title>KSR, a novel protein kinase required for RAS signal transduction.</title>
        <authorList>
            <person name="Therrien M."/>
            <person name="Chang H.C."/>
            <person name="Solomon N.M."/>
            <person name="Karim F.D."/>
            <person name="Wassarman D.A."/>
            <person name="Rubin G.M."/>
        </authorList>
    </citation>
    <scope>NUCLEOTIDE SEQUENCE [MRNA] (ISOFORM 1)</scope>
</reference>
<reference key="2">
    <citation type="journal article" date="2000" name="Mol. Cell. Biol.">
        <title>Identification of B-KSR1, a novel brain-specific isoform of KSR1 that functions in neuronal signaling.</title>
        <authorList>
            <person name="Mueller J."/>
            <person name="Cacace A.M."/>
            <person name="Lyons W.E."/>
            <person name="McGill C.B."/>
            <person name="Morrison D.K."/>
        </authorList>
    </citation>
    <scope>NUCLEOTIDE SEQUENCE (ISOFORMS 1 AND 2)</scope>
    <scope>INTERACTION WITH MAPK</scope>
    <scope>MUTAGENESIS OF GLY-572; ARG-589; ARG-615; ASP-700 AND CYS-809</scope>
    <scope>TISSUE SPECIFICITY</scope>
    <source>
        <tissue>Brain</tissue>
    </source>
</reference>
<reference key="3">
    <citation type="submission" date="2004-11" db="EMBL/GenBank/DDBJ databases">
        <authorList>
            <person name="Pelan S."/>
        </authorList>
    </citation>
    <scope>NUCLEOTIDE SEQUENCE [LARGE SCALE GENOMIC DNA]</scope>
</reference>
<reference key="4">
    <citation type="journal article" date="1995" name="Mamm. Genome">
        <title>YAC/P1 contigs defining the location of 56 microsatellite markers and several genes across a 3.4cM interval on mouse chromosome 11.</title>
        <authorList>
            <person name="Nehls M."/>
            <person name="Luno K."/>
            <person name="Schorpp M."/>
            <person name="Pfeifer D."/>
            <person name="Krause S."/>
            <person name="Matysiak-Scholze U."/>
            <person name="Dierbach H."/>
            <person name="Boehm T."/>
        </authorList>
    </citation>
    <scope>NUCLEOTIDE SEQUENCE [MRNA] OF 49-474 (ISOFORMS 1/2)</scope>
    <source>
        <strain>BALB/cJ</strain>
    </source>
</reference>
<reference key="5">
    <citation type="journal article" date="1999" name="Mol. Cell. Biol.">
        <title>Kinase suppressor of Ras forms a multiprotein signaling complex and modulates MEK localization.</title>
        <authorList>
            <person name="Stewart S."/>
            <person name="Sundaram M."/>
            <person name="Zhang Y."/>
            <person name="Lee J."/>
            <person name="Han M."/>
            <person name="Guan K.L."/>
        </authorList>
    </citation>
    <scope>FUNCTION</scope>
    <scope>INTERACTION WITH MAP2K1; MAP2K2; HSP90AA1; YWHAB AND CDC37</scope>
    <scope>SUBCELLULAR LOCATION</scope>
    <scope>DOMAIN</scope>
    <scope>MUTAGENESIS OF 56-LEU--ARG-57; GLY-580; ARG-589; ARG-615 AND CYS-809</scope>
</reference>
<reference key="6">
    <citation type="journal article" date="2001" name="Mol. Cell">
        <title>C-TAK1 regulates Ras signaling by phosphorylating the MAPK scaffold, KSR1.</title>
        <authorList>
            <person name="Mueller J."/>
            <person name="Ory S."/>
            <person name="Copeland T."/>
            <person name="Piwnica-Worms H."/>
            <person name="Morrison D.K."/>
        </authorList>
    </citation>
    <scope>INTERACTION WITH MARK3 AND 14-3-3</scope>
    <scope>PHOSPHORYLATION AT SER-297 AND SER-392</scope>
    <scope>MUTAGENESIS OF SER-297; SER-392; ILE-397 AND VAL-401</scope>
    <scope>SUBCELLULAR LOCATION</scope>
</reference>
<reference key="7">
    <citation type="journal article" date="2002" name="Curr. Biol.">
        <title>MAP kinase module: the Ksr connection.</title>
        <authorList>
            <person name="Roy F."/>
            <person name="Therrien M."/>
        </authorList>
    </citation>
    <scope>REVIEW</scope>
</reference>
<reference key="8">
    <citation type="journal article" date="2003" name="Curr. Biol.">
        <title>Protein phosphatase 2A positively regulates Ras signaling by dephosphorylating KSR1 and Raf-1 on critical 14-3-3 binding sites.</title>
        <authorList>
            <person name="Ory S."/>
            <person name="Zhou M."/>
            <person name="Conrads T.P."/>
            <person name="Veenstra T.D."/>
            <person name="Morrison D.K."/>
        </authorList>
    </citation>
    <scope>FUNCTION</scope>
    <scope>INTERACTION WITH PPP2R1A AND PPP2CA</scope>
    <scope>DEPHOSPHORYLATION BY PPP2CA</scope>
    <scope>SUBCELLULAR LOCATION</scope>
</reference>
<reference key="9">
    <citation type="journal article" date="2003" name="EMBO J.">
        <title>Functional analysis of C-TAK1 substrate binding and identification of PKP2 as a new C-TAK1 substrate.</title>
        <authorList>
            <person name="Mueller J."/>
            <person name="Ritt D.A."/>
            <person name="Copeland T.D."/>
            <person name="Morrison D.K."/>
        </authorList>
    </citation>
    <scope>INTERACTION WITH MARK3</scope>
    <scope>SUBCELLULAR LOCATION</scope>
    <scope>PHOSPHORYLATION AT SER-297 AND SER-392</scope>
    <scope>MUTAGENESIS OF LEU-382; LEU-387; ARG-389; THR-390; GLU-391; SER-392; VAL-393; PRO-394; SER-395; ASP-396; ILE-397; PRO-400; VAL-401; ARG-403 AND PRO-413</scope>
</reference>
<reference key="10">
    <citation type="journal article" date="2010" name="Cell">
        <title>A tissue-specific atlas of mouse protein phosphorylation and expression.</title>
        <authorList>
            <person name="Huttlin E.L."/>
            <person name="Jedrychowski M.P."/>
            <person name="Elias J.E."/>
            <person name="Goswami T."/>
            <person name="Rad R."/>
            <person name="Beausoleil S.A."/>
            <person name="Villen J."/>
            <person name="Haas W."/>
            <person name="Sowa M.E."/>
            <person name="Gygi S.P."/>
        </authorList>
    </citation>
    <scope>PHOSPHORYLATION [LARGE SCALE ANALYSIS] AT SER-320; SER-392 AND SER-518</scope>
    <scope>IDENTIFICATION BY MASS SPECTROMETRY [LARGE SCALE ANALYSIS]</scope>
    <source>
        <tissue>Brain</tissue>
        <tissue>Brown adipose tissue</tissue>
        <tissue>Kidney</tissue>
        <tissue>Lung</tissue>
        <tissue>Spleen</tissue>
    </source>
</reference>
<reference key="11">
    <citation type="journal article" date="2010" name="Nat. Cell Biol.">
        <title>AKAP-Lbc enhances cyclic AMP control of the ERK1/2 cascade.</title>
        <authorList>
            <person name="Smith F.D."/>
            <person name="Langeberg L.K."/>
            <person name="Cellurale C."/>
            <person name="Pawson T."/>
            <person name="Morrison D.K."/>
            <person name="Davis R.J."/>
            <person name="Scott J.D."/>
        </authorList>
    </citation>
    <scope>FUNCTION</scope>
    <scope>INTERACTION WITH AKAP13; MAP2K1 AND BRAF</scope>
    <scope>IDENTIFICATION BY MASS SPECTROMETRY</scope>
    <scope>PHOSPHORYLATION AT SER-838</scope>
    <scope>MUTAGENESIS OF SER-838</scope>
</reference>
<reference key="12">
    <citation type="journal article" date="2002" name="J. Mol. Biol.">
        <title>Solution structure and functional analysis of the cysteine-rich C1 domain of kinase suppressor of Ras (KSR).</title>
        <authorList>
            <person name="Zhou M."/>
            <person name="Horita D.A."/>
            <person name="Waugh D.S."/>
            <person name="Byrd R.A."/>
            <person name="Morrison D.K."/>
        </authorList>
    </citation>
    <scope>STRUCTURE BY NMR OF 331-378 IN COMPLEX WITH ZINC</scope>
</reference>
<reference key="13">
    <citation type="journal article" date="2011" name="Proc. Natl. Acad. Sci. U.S.A.">
        <title>Mutation that blocks ATP binding creates a pseudokinase stabilizing the scaffolding function of kinase suppressor of Ras, CRAF and BRAF.</title>
        <authorList>
            <person name="Hu J."/>
            <person name="Yu H."/>
            <person name="Kornev A.P."/>
            <person name="Zhao J."/>
            <person name="Filbert E.L."/>
            <person name="Taylor S.S."/>
            <person name="Shaw A.S."/>
        </authorList>
    </citation>
    <scope>FUNCTION</scope>
    <scope>CATALYTIC ACTIVITY</scope>
    <scope>INTERACTION WITH BRAF AND MAP2K1</scope>
    <scope>MUTAGENESIS OF ALA-587</scope>
</reference>
<reference evidence="19" key="14">
    <citation type="journal article" date="2012" name="Sci. Signal.">
        <title>A CC-SAM, for coiled coil-sterile alpha motif, domain targets the scaffold KSR-1 to specific sites in the plasma membrane.</title>
        <authorList>
            <person name="Koveal D."/>
            <person name="Schuh-Nuhfer N."/>
            <person name="Ritt D."/>
            <person name="Page R."/>
            <person name="Morrison D.K."/>
            <person name="Peti W."/>
        </authorList>
    </citation>
    <scope>STRUCTURE BY NMR OF 25-170</scope>
    <scope>INTERACTION WITH BRAF AND MAP2K1</scope>
    <scope>DOMAIN</scope>
    <scope>SUBCELLULAR LOCATION</scope>
    <scope>MUTAGENESIS OF 56-LEU-ARG-57; ILE-71 AND LEU-78</scope>
</reference>
<feature type="chain" id="PRO_0000086230" description="Kinase suppressor of Ras 1">
    <location>
        <begin position="1"/>
        <end position="873"/>
    </location>
</feature>
<feature type="domain" description="Protein kinase" evidence="4">
    <location>
        <begin position="563"/>
        <end position="833"/>
    </location>
</feature>
<feature type="zinc finger region" description="Phorbol-ester/DAG-type" evidence="5">
    <location>
        <begin position="333"/>
        <end position="377"/>
    </location>
</feature>
<feature type="region of interest" description="Mediates association with membranes" evidence="16">
    <location>
        <begin position="1"/>
        <end position="170"/>
    </location>
</feature>
<feature type="region of interest" description="Disordered" evidence="7">
    <location>
        <begin position="1"/>
        <end position="24"/>
    </location>
</feature>
<feature type="region of interest" description="Disordered" evidence="7">
    <location>
        <begin position="174"/>
        <end position="230"/>
    </location>
</feature>
<feature type="region of interest" description="Disordered" evidence="7">
    <location>
        <begin position="251"/>
        <end position="281"/>
    </location>
</feature>
<feature type="region of interest" description="Disordered" evidence="7">
    <location>
        <begin position="416"/>
        <end position="473"/>
    </location>
</feature>
<feature type="region of interest" description="Disordered" evidence="7">
    <location>
        <begin position="506"/>
        <end position="544"/>
    </location>
</feature>
<feature type="compositionally biased region" description="Polar residues" evidence="7">
    <location>
        <begin position="206"/>
        <end position="216"/>
    </location>
</feature>
<feature type="compositionally biased region" description="Low complexity" evidence="7">
    <location>
        <begin position="429"/>
        <end position="458"/>
    </location>
</feature>
<feature type="compositionally biased region" description="Basic and acidic residues" evidence="7">
    <location>
        <begin position="506"/>
        <end position="519"/>
    </location>
</feature>
<feature type="compositionally biased region" description="Acidic residues" evidence="7">
    <location>
        <begin position="520"/>
        <end position="530"/>
    </location>
</feature>
<feature type="active site" description="Proton acceptor" evidence="6">
    <location>
        <position position="683"/>
    </location>
</feature>
<feature type="binding site" evidence="11">
    <location>
        <position position="334"/>
    </location>
    <ligand>
        <name>Zn(2+)</name>
        <dbReference type="ChEBI" id="CHEBI:29105"/>
        <label>1</label>
    </ligand>
</feature>
<feature type="binding site" evidence="11">
    <location>
        <position position="346"/>
    </location>
    <ligand>
        <name>Zn(2+)</name>
        <dbReference type="ChEBI" id="CHEBI:29105"/>
        <label>2</label>
    </ligand>
</feature>
<feature type="binding site" evidence="11">
    <location>
        <position position="349"/>
    </location>
    <ligand>
        <name>Zn(2+)</name>
        <dbReference type="ChEBI" id="CHEBI:29105"/>
        <label>2</label>
    </ligand>
</feature>
<feature type="binding site" evidence="11">
    <location>
        <position position="359"/>
    </location>
    <ligand>
        <name>Zn(2+)</name>
        <dbReference type="ChEBI" id="CHEBI:29105"/>
        <label>1</label>
    </ligand>
</feature>
<feature type="binding site" evidence="11">
    <location>
        <position position="362"/>
    </location>
    <ligand>
        <name>Zn(2+)</name>
        <dbReference type="ChEBI" id="CHEBI:29105"/>
        <label>1</label>
    </ligand>
</feature>
<feature type="binding site" evidence="11">
    <location>
        <position position="367"/>
    </location>
    <ligand>
        <name>Zn(2+)</name>
        <dbReference type="ChEBI" id="CHEBI:29105"/>
        <label>2</label>
    </ligand>
</feature>
<feature type="binding site" evidence="11">
    <location>
        <position position="370"/>
    </location>
    <ligand>
        <name>Zn(2+)</name>
        <dbReference type="ChEBI" id="CHEBI:29105"/>
        <label>2</label>
    </ligand>
</feature>
<feature type="binding site" evidence="11">
    <location>
        <position position="377"/>
    </location>
    <ligand>
        <name>Zn(2+)</name>
        <dbReference type="ChEBI" id="CHEBI:29105"/>
        <label>1</label>
    </ligand>
</feature>
<feature type="binding site" evidence="4">
    <location>
        <begin position="569"/>
        <end position="577"/>
    </location>
    <ligand>
        <name>ATP</name>
        <dbReference type="ChEBI" id="CHEBI:30616"/>
    </ligand>
</feature>
<feature type="binding site" evidence="1">
    <location>
        <position position="685"/>
    </location>
    <ligand>
        <name>ATP</name>
        <dbReference type="ChEBI" id="CHEBI:30616"/>
    </ligand>
</feature>
<feature type="binding site" evidence="1">
    <location>
        <position position="700"/>
    </location>
    <ligand>
        <name>ATP</name>
        <dbReference type="ChEBI" id="CHEBI:30616"/>
    </ligand>
</feature>
<feature type="modified residue" description="Phosphothreonine" evidence="2">
    <location>
        <position position="256"/>
    </location>
</feature>
<feature type="modified residue" description="Phosphothreonine" evidence="2">
    <location>
        <position position="260"/>
    </location>
</feature>
<feature type="modified residue" description="Phosphoserine; by MARK3" evidence="10 13">
    <location>
        <position position="297"/>
    </location>
</feature>
<feature type="modified residue" description="Phosphoserine" evidence="20">
    <location>
        <position position="320"/>
    </location>
</feature>
<feature type="modified residue" description="Phosphoserine" evidence="2">
    <location>
        <position position="337"/>
    </location>
</feature>
<feature type="modified residue" description="Phosphoserine; by MARK3" evidence="13">
    <location>
        <position position="392"/>
    </location>
</feature>
<feature type="modified residue" description="Phosphothreonine" evidence="2">
    <location>
        <position position="411"/>
    </location>
</feature>
<feature type="modified residue" description="Phosphoserine" evidence="20">
    <location>
        <position position="518"/>
    </location>
</feature>
<feature type="modified residue" description="Phosphoserine" evidence="14">
    <location>
        <position position="838"/>
    </location>
</feature>
<feature type="splice variant" id="VSP_012232" description="In isoform 2." evidence="17">
    <original>P</original>
    <variation>PAAYFIHHRQQFIFP</variation>
    <location>
        <position position="474"/>
    </location>
</feature>
<feature type="splice variant" id="VSP_012233" description="In isoform 2." evidence="17">
    <original>DINSSKVMPRFERFGLGTLESGNPKM</original>
    <variation>EL</variation>
    <location>
        <begin position="848"/>
        <end position="873"/>
    </location>
</feature>
<feature type="mutagenesis site" description="No effect on the interaction with MAP2K1, MAP2K2 and YWHAE. Abolishes interaction with BRAF. Abolishes location at membrane ruffles." evidence="8 16">
    <original>LR</original>
    <variation>GS</variation>
    <location>
        <begin position="56"/>
        <end position="57"/>
    </location>
</feature>
<feature type="mutagenesis site" description="Impairs interaction with BRAF and association with membrane ruffles; when associated with A-78." evidence="16">
    <original>I</original>
    <variation>A</variation>
    <location>
        <position position="71"/>
    </location>
</feature>
<feature type="mutagenesis site" description="Impairs interaction with BRAF and association with membrane ruffles; when associated with A-78." evidence="16">
    <original>L</original>
    <variation>A</variation>
    <location>
        <position position="78"/>
    </location>
</feature>
<feature type="mutagenesis site" description="Constitutive targeting to the plasma membrane; when associated with A-392." evidence="10">
    <original>S</original>
    <variation>A</variation>
    <location>
        <position position="297"/>
    </location>
</feature>
<feature type="mutagenesis site" description="No effect on interaction with MARK3." evidence="13">
    <original>L</original>
    <variation>A</variation>
    <location>
        <position position="382"/>
    </location>
</feature>
<feature type="mutagenesis site" description="Reduces interaction with MARK3. Reduces phosphorylation of S-392 by MARK3." evidence="13">
    <original>L</original>
    <variation>A</variation>
    <location>
        <position position="387"/>
    </location>
</feature>
<feature type="mutagenesis site" description="Reduces phosphorylation of S-392 by MARK3." evidence="13">
    <original>R</original>
    <variation>A</variation>
    <location>
        <position position="389"/>
    </location>
</feature>
<feature type="mutagenesis site" description="No effect on phosphorylation of S-392 by MARK3." evidence="13">
    <original>T</original>
    <variation>A</variation>
    <location>
        <position position="390"/>
    </location>
</feature>
<feature type="mutagenesis site" description="No effect on phosphorylation of S-392 by MARK3." evidence="13">
    <original>E</original>
    <variation>A</variation>
    <location>
        <position position="391"/>
    </location>
</feature>
<feature type="mutagenesis site" description="Constitutive targeting to the plasma membrane; when associated with A-297. No effect on interaction with MARK3. Abolishes phosphorylation by MARK3." evidence="10 13">
    <original>S</original>
    <variation>A</variation>
    <location>
        <position position="392"/>
    </location>
</feature>
<feature type="mutagenesis site" description="Reduces phosphorylation of S-392 by MARK3." evidence="13">
    <original>V</original>
    <variation>A</variation>
    <location>
        <position position="393"/>
    </location>
</feature>
<feature type="mutagenesis site" description="No effect on phosphorylation of S-392 by MARK3." evidence="13">
    <original>P</original>
    <variation>A</variation>
    <location>
        <position position="394"/>
    </location>
</feature>
<feature type="mutagenesis site" description="No effect on phosphorylation of S-392 by MARK3." evidence="13">
    <original>S</original>
    <variation>A</variation>
    <location>
        <position position="395"/>
    </location>
</feature>
<feature type="mutagenesis site" description="No effect on phosphorylation of S-392 by MARK3." evidence="13">
    <original>D</original>
    <variation>A</variation>
    <location>
        <position position="396"/>
    </location>
</feature>
<feature type="mutagenesis site" description="Decrease in MARK3 binding; when associated with A-401. Abolishes interaction with MARK3. Reduces phosphorylation of S-392 by MARK3." evidence="10 13">
    <original>I</original>
    <variation>A</variation>
    <location>
        <position position="397"/>
    </location>
</feature>
<feature type="mutagenesis site" description="No effect on interaction with MARK3." evidence="13">
    <original>P</original>
    <variation>A</variation>
    <location>
        <position position="400"/>
    </location>
</feature>
<feature type="mutagenesis site" description="Decrease in MARK3 binding; when associated with A-397. No effect on interaction with MARK3." evidence="10 13">
    <original>V</original>
    <variation>A</variation>
    <location>
        <position position="401"/>
    </location>
</feature>
<feature type="mutagenesis site" description="No effect on interaction with MARK3." evidence="13">
    <original>R</original>
    <variation>A</variation>
    <location>
        <position position="403"/>
    </location>
</feature>
<feature type="mutagenesis site" description="No effect on interaction with MARK3." evidence="13">
    <original>P</original>
    <variation>A</variation>
    <location>
        <position position="413"/>
    </location>
</feature>
<feature type="mutagenesis site" description="Decrease in MEK binding." evidence="9">
    <original>G</original>
    <variation>E</variation>
    <location>
        <position position="572"/>
    </location>
</feature>
<feature type="mutagenesis site" description="Partial decrease in MAP2K1 and MAP2K2 binding. No effect on the interaction with YWHAE." evidence="8">
    <original>G</original>
    <variation>E</variation>
    <location>
        <position position="580"/>
    </location>
</feature>
<feature type="mutagenesis site" description="Loss of ATP binding and reduces MAPK1 and MAPK3 phosphorylation levels. Loss of kinase activity towards MAP2K1 in vitro. Abnormal constitutive interaction with CRAF. No effect on the interaction with BRAF and MAP2K1." evidence="15">
    <original>A</original>
    <variation>F</variation>
    <location>
        <position position="587"/>
    </location>
</feature>
<feature type="mutagenesis site" description="No effect on ATP binding and MAPK1 and MAPK3 phosphorylation levels. No effect on the interaction with MAP2K1." evidence="15">
    <original>A</original>
    <variation>V</variation>
    <location>
        <position position="587"/>
    </location>
</feature>
<feature type="mutagenesis site" description="Severe decrease in MAP2K1 and MAP2K2 binding. No effect on the interaction with YWHAE." evidence="8 9">
    <original>R</original>
    <variation>M</variation>
    <location>
        <position position="589"/>
    </location>
</feature>
<feature type="mutagenesis site" description="Severe decrease in MAP2K1 and MAP2K2 binding. No effect on the interaction with YWHAE." evidence="8 9">
    <original>R</original>
    <variation>H</variation>
    <location>
        <position position="615"/>
    </location>
</feature>
<feature type="mutagenesis site" description="Decrease in MEK binding." evidence="9">
    <original>D</original>
    <variation>V</variation>
    <location>
        <position position="700"/>
    </location>
</feature>
<feature type="mutagenesis site" description="Associates almost exclusively with the membrane. Loss of MAP2K2 and MAP2K2 binding and recruitment to the membrane. Loss of MAP kinase-mediated inhibition of ELK1 phosphorylation. No effect on the interaction with YWHAE." evidence="8 9">
    <original>C</original>
    <variation>Y</variation>
    <location>
        <position position="809"/>
    </location>
</feature>
<feature type="mutagenesis site" description="Abolishes one phosphorylation site. Decreases phosphorylation by PKA." evidence="14">
    <original>S</original>
    <variation>A</variation>
    <location>
        <position position="838"/>
    </location>
</feature>
<feature type="turn" evidence="22">
    <location>
        <begin position="30"/>
        <end position="32"/>
    </location>
</feature>
<feature type="helix" evidence="22">
    <location>
        <begin position="33"/>
        <end position="36"/>
    </location>
</feature>
<feature type="helix" evidence="22">
    <location>
        <begin position="37"/>
        <end position="39"/>
    </location>
</feature>
<feature type="helix" evidence="22">
    <location>
        <begin position="47"/>
        <end position="58"/>
    </location>
</feature>
<feature type="helix" evidence="22">
    <location>
        <begin position="65"/>
        <end position="82"/>
    </location>
</feature>
<feature type="helix" evidence="22">
    <location>
        <begin position="83"/>
        <end position="85"/>
    </location>
</feature>
<feature type="helix" evidence="22">
    <location>
        <begin position="88"/>
        <end position="90"/>
    </location>
</feature>
<feature type="turn" evidence="22">
    <location>
        <begin position="94"/>
        <end position="96"/>
    </location>
</feature>
<feature type="helix" evidence="22">
    <location>
        <begin position="101"/>
        <end position="103"/>
    </location>
</feature>
<feature type="turn" evidence="22">
    <location>
        <begin position="108"/>
        <end position="110"/>
    </location>
</feature>
<feature type="helix" evidence="22">
    <location>
        <begin position="111"/>
        <end position="114"/>
    </location>
</feature>
<feature type="helix" evidence="22">
    <location>
        <begin position="118"/>
        <end position="121"/>
    </location>
</feature>
<feature type="helix" evidence="22">
    <location>
        <begin position="130"/>
        <end position="133"/>
    </location>
</feature>
<feature type="helix" evidence="22">
    <location>
        <begin position="138"/>
        <end position="146"/>
    </location>
</feature>
<feature type="turn" evidence="22">
    <location>
        <begin position="147"/>
        <end position="149"/>
    </location>
</feature>
<feature type="helix" evidence="22">
    <location>
        <begin position="153"/>
        <end position="162"/>
    </location>
</feature>
<feature type="helix" evidence="22">
    <location>
        <begin position="163"/>
        <end position="167"/>
    </location>
</feature>
<feature type="strand" evidence="21">
    <location>
        <begin position="336"/>
        <end position="339"/>
    </location>
</feature>
<feature type="strand" evidence="21">
    <location>
        <begin position="347"/>
        <end position="349"/>
    </location>
</feature>
<feature type="strand" evidence="21">
    <location>
        <begin position="356"/>
        <end position="359"/>
    </location>
</feature>
<feature type="turn" evidence="21">
    <location>
        <begin position="360"/>
        <end position="363"/>
    </location>
</feature>
<feature type="strand" evidence="21">
    <location>
        <begin position="364"/>
        <end position="369"/>
    </location>
</feature>
<feature type="turn" evidence="21">
    <location>
        <begin position="371"/>
        <end position="373"/>
    </location>
</feature>
<protein>
    <recommendedName>
        <fullName>Kinase suppressor of Ras 1</fullName>
        <shortName>mKSR1</shortName>
        <ecNumber evidence="15">2.7.11.1</ecNumber>
    </recommendedName>
    <alternativeName>
        <fullName>Protein Hb</fullName>
    </alternativeName>
</protein>
<sequence>MDRAALRAAAMGEKKEGGGGGAAADGGAGAAVSRALQQCGQLQKLIDISIGSLRGLRTKCSVSNDLTQQEIRTLEAKLVKYICKQQQSKLSVTPSDRTAELNSYPRFSDWLYIFNVRPEVVQEIPQELTLDALLEMDEAKAKEMLRRWGASTEECSRLQQALTCLRKVTGLGGEHKMDSGWSSTDARDSSLGPPMDMLSSLGRAGASTQGPRSISVSALPASDSPVPGLSEGLSDSCIPLHTSGRLTPRALHSFITPPTTPQLRRHAKLKPPRTPPPPSRKVFQLLPSFPTLTRSKSHESQLGNRIDDVTPMKFELPHGSPQLVRRDIGLSVTHRFSTKSWLSQVCNVCQKSMIFGVKCKHCRLKCHNKCTKEAPACRITFLPLARLRRTESVPSDINNPVDRAAEPHFGTLPKALTKKEHPPAMNLDSSSNPSSTTSSTPSSPAPFLTSSNPSSATTPPNPSPGQRDSRFSFPDISACSQAAPLSSTADSTRLDDQPKTDVLGVHEAEAEEPEAGKSEAEDDEEDEVDDLPSSRRPWRGPISRKASQTSVYLQEWDIPFEQVELGEPIGQGRWGRVHRGRWHGEVAIRLLEMDGHNQDHLKLFKKEVMNYRQTRHENVVLFMGACMNPPHLAIITSFCKGRTLHSFVRDPKTSLDINKTRQIAQEIIKGMGYLHAKGIVHKDLKSKNVFYDNGKVVITDFGLFGISGVVREERRENQLKLSHDWLCYLAPEIVREMIPGRDEDQLPFSKAADVYAFGTVWYELQARDWPFKHQPAEALIWQIGSGEGVRRVLASVSLGKEVGEILSACWAFDLQERPSFSLLMDMLERLPKLNRRLSHPGHFWKSADINSSKVMPRFERFGLGTLESGNPKM</sequence>
<gene>
    <name type="primary">Ksr1</name>
    <name type="synonym">Ksr</name>
</gene>
<accession>Q61097</accession>
<accession>Q61648</accession>
<accession>Q78DX8</accession>
<name>KSR1_MOUSE</name>
<keyword id="KW-0002">3D-structure</keyword>
<keyword id="KW-0025">Alternative splicing</keyword>
<keyword id="KW-0067">ATP-binding</keyword>
<keyword id="KW-1003">Cell membrane</keyword>
<keyword id="KW-0966">Cell projection</keyword>
<keyword id="KW-0963">Cytoplasm</keyword>
<keyword id="KW-0256">Endoplasmic reticulum</keyword>
<keyword id="KW-0418">Kinase</keyword>
<keyword id="KW-0472">Membrane</keyword>
<keyword id="KW-0479">Metal-binding</keyword>
<keyword id="KW-0547">Nucleotide-binding</keyword>
<keyword id="KW-0597">Phosphoprotein</keyword>
<keyword id="KW-1185">Reference proteome</keyword>
<keyword id="KW-0723">Serine/threonine-protein kinase</keyword>
<keyword id="KW-0808">Transferase</keyword>
<keyword id="KW-0862">Zinc</keyword>
<keyword id="KW-0863">Zinc-finger</keyword>
<organism>
    <name type="scientific">Mus musculus</name>
    <name type="common">Mouse</name>
    <dbReference type="NCBI Taxonomy" id="10090"/>
    <lineage>
        <taxon>Eukaryota</taxon>
        <taxon>Metazoa</taxon>
        <taxon>Chordata</taxon>
        <taxon>Craniata</taxon>
        <taxon>Vertebrata</taxon>
        <taxon>Euteleostomi</taxon>
        <taxon>Mammalia</taxon>
        <taxon>Eutheria</taxon>
        <taxon>Euarchontoglires</taxon>
        <taxon>Glires</taxon>
        <taxon>Rodentia</taxon>
        <taxon>Myomorpha</taxon>
        <taxon>Muroidea</taxon>
        <taxon>Muridae</taxon>
        <taxon>Murinae</taxon>
        <taxon>Mus</taxon>
        <taxon>Mus</taxon>
    </lineage>
</organism>
<dbReference type="EC" id="2.7.11.1" evidence="15"/>
<dbReference type="EMBL" id="U43585">
    <property type="protein sequence ID" value="AAC52382.1"/>
    <property type="molecule type" value="mRNA"/>
</dbReference>
<dbReference type="EMBL" id="AL592551">
    <property type="status" value="NOT_ANNOTATED_CDS"/>
    <property type="molecule type" value="Genomic_DNA"/>
</dbReference>
<dbReference type="EMBL" id="X81634">
    <property type="protein sequence ID" value="CAA57288.1"/>
    <property type="molecule type" value="mRNA"/>
</dbReference>
<dbReference type="CCDS" id="CCDS25117.1">
    <molecule id="Q61097-1"/>
</dbReference>
<dbReference type="PIR" id="I48379">
    <property type="entry name" value="I48379"/>
</dbReference>
<dbReference type="RefSeq" id="NP_001335136.1">
    <property type="nucleotide sequence ID" value="NM_001348207.1"/>
</dbReference>
<dbReference type="RefSeq" id="NP_038599.1">
    <molecule id="Q61097-1"/>
    <property type="nucleotide sequence ID" value="NM_013571.3"/>
</dbReference>
<dbReference type="RefSeq" id="XP_006532398.1">
    <molecule id="Q61097-2"/>
    <property type="nucleotide sequence ID" value="XM_006532335.5"/>
</dbReference>
<dbReference type="PDB" id="1KBE">
    <property type="method" value="NMR"/>
    <property type="chains" value="A=331-378"/>
</dbReference>
<dbReference type="PDB" id="1KBF">
    <property type="method" value="NMR"/>
    <property type="chains" value="A=331-378"/>
</dbReference>
<dbReference type="PDB" id="2LPE">
    <property type="method" value="NMR"/>
    <property type="chains" value="A=25-170"/>
</dbReference>
<dbReference type="PDBsum" id="1KBE"/>
<dbReference type="PDBsum" id="1KBF"/>
<dbReference type="PDBsum" id="2LPE"/>
<dbReference type="BMRB" id="Q61097"/>
<dbReference type="SMR" id="Q61097"/>
<dbReference type="BioGRID" id="201048">
    <property type="interactions" value="239"/>
</dbReference>
<dbReference type="CORUM" id="Q61097"/>
<dbReference type="FunCoup" id="Q61097">
    <property type="interactions" value="1846"/>
</dbReference>
<dbReference type="IntAct" id="Q61097">
    <property type="interactions" value="9"/>
</dbReference>
<dbReference type="MINT" id="Q61097"/>
<dbReference type="STRING" id="10090.ENSMUSP00000018478"/>
<dbReference type="GlyGen" id="Q61097">
    <property type="glycosylation" value="1 site"/>
</dbReference>
<dbReference type="iPTMnet" id="Q61097"/>
<dbReference type="PhosphoSitePlus" id="Q61097"/>
<dbReference type="jPOST" id="Q61097"/>
<dbReference type="PaxDb" id="10090-ENSMUSP00000018478"/>
<dbReference type="PeptideAtlas" id="Q61097"/>
<dbReference type="ProteomicsDB" id="263568">
    <molecule id="Q61097-1"/>
</dbReference>
<dbReference type="ProteomicsDB" id="263569">
    <molecule id="Q61097-2"/>
</dbReference>
<dbReference type="Pumba" id="Q61097"/>
<dbReference type="Antibodypedia" id="2110">
    <property type="antibodies" value="425 antibodies from 33 providers"/>
</dbReference>
<dbReference type="DNASU" id="16706"/>
<dbReference type="Ensembl" id="ENSMUST00000018478.11">
    <molecule id="Q61097-1"/>
    <property type="protein sequence ID" value="ENSMUSP00000018478.5"/>
    <property type="gene ID" value="ENSMUSG00000018334.19"/>
</dbReference>
<dbReference type="GeneID" id="16706"/>
<dbReference type="KEGG" id="mmu:16706"/>
<dbReference type="UCSC" id="uc033fyo.1">
    <molecule id="Q61097-1"/>
    <property type="organism name" value="mouse"/>
</dbReference>
<dbReference type="AGR" id="MGI:105051"/>
<dbReference type="CTD" id="8844"/>
<dbReference type="MGI" id="MGI:105051">
    <property type="gene designation" value="Ksr1"/>
</dbReference>
<dbReference type="VEuPathDB" id="HostDB:ENSMUSG00000018334"/>
<dbReference type="eggNOG" id="KOG0193">
    <property type="taxonomic scope" value="Eukaryota"/>
</dbReference>
<dbReference type="GeneTree" id="ENSGT00940000156066"/>
<dbReference type="HOGENOM" id="CLU_006812_0_0_1"/>
<dbReference type="InParanoid" id="Q61097"/>
<dbReference type="OMA" id="TWRGPIS"/>
<dbReference type="OrthoDB" id="774951at2759"/>
<dbReference type="PhylomeDB" id="Q61097"/>
<dbReference type="TreeFam" id="TF317006"/>
<dbReference type="Reactome" id="R-MMU-5673000">
    <property type="pathway name" value="RAF activation"/>
</dbReference>
<dbReference type="Reactome" id="R-MMU-5674135">
    <property type="pathway name" value="MAP2K and MAPK activation"/>
</dbReference>
<dbReference type="Reactome" id="R-MMU-5675221">
    <property type="pathway name" value="Negative regulation of MAPK pathway"/>
</dbReference>
<dbReference type="BioGRID-ORCS" id="16706">
    <property type="hits" value="2 hits in 79 CRISPR screens"/>
</dbReference>
<dbReference type="ChiTaRS" id="Ksr1">
    <property type="organism name" value="mouse"/>
</dbReference>
<dbReference type="EvolutionaryTrace" id="Q61097"/>
<dbReference type="PRO" id="PR:Q61097"/>
<dbReference type="Proteomes" id="UP000000589">
    <property type="component" value="Chromosome 11"/>
</dbReference>
<dbReference type="RNAct" id="Q61097">
    <property type="molecule type" value="protein"/>
</dbReference>
<dbReference type="Bgee" id="ENSMUSG00000018334">
    <property type="expression patterns" value="Expressed in hindlimb stylopod muscle and 182 other cell types or tissues"/>
</dbReference>
<dbReference type="ExpressionAtlas" id="Q61097">
    <property type="expression patterns" value="baseline and differential"/>
</dbReference>
<dbReference type="GO" id="GO:0005829">
    <property type="term" value="C:cytosol"/>
    <property type="evidence" value="ECO:0007669"/>
    <property type="project" value="Ensembl"/>
</dbReference>
<dbReference type="GO" id="GO:0005783">
    <property type="term" value="C:endoplasmic reticulum"/>
    <property type="evidence" value="ECO:0000266"/>
    <property type="project" value="MGI"/>
</dbReference>
<dbReference type="GO" id="GO:0005789">
    <property type="term" value="C:endoplasmic reticulum membrane"/>
    <property type="evidence" value="ECO:0007669"/>
    <property type="project" value="UniProtKB-SubCell"/>
</dbReference>
<dbReference type="GO" id="GO:0016020">
    <property type="term" value="C:membrane"/>
    <property type="evidence" value="ECO:0000266"/>
    <property type="project" value="MGI"/>
</dbReference>
<dbReference type="GO" id="GO:0032991">
    <property type="term" value="C:protein-containing complex"/>
    <property type="evidence" value="ECO:0000266"/>
    <property type="project" value="MGI"/>
</dbReference>
<dbReference type="GO" id="GO:0032587">
    <property type="term" value="C:ruffle membrane"/>
    <property type="evidence" value="ECO:0007669"/>
    <property type="project" value="UniProtKB-SubCell"/>
</dbReference>
<dbReference type="GO" id="GO:0071889">
    <property type="term" value="F:14-3-3 protein binding"/>
    <property type="evidence" value="ECO:0000353"/>
    <property type="project" value="UniProtKB"/>
</dbReference>
<dbReference type="GO" id="GO:0005524">
    <property type="term" value="F:ATP binding"/>
    <property type="evidence" value="ECO:0000315"/>
    <property type="project" value="UniProtKB"/>
</dbReference>
<dbReference type="GO" id="GO:0051879">
    <property type="term" value="F:Hsp90 protein binding"/>
    <property type="evidence" value="ECO:0000353"/>
    <property type="project" value="UniProtKB"/>
</dbReference>
<dbReference type="GO" id="GO:0005078">
    <property type="term" value="F:MAP-kinase scaffold activity"/>
    <property type="evidence" value="ECO:0000314"/>
    <property type="project" value="MGI"/>
</dbReference>
<dbReference type="GO" id="GO:0031434">
    <property type="term" value="F:mitogen-activated protein kinase kinase binding"/>
    <property type="evidence" value="ECO:0000353"/>
    <property type="project" value="UniProtKB"/>
</dbReference>
<dbReference type="GO" id="GO:0004672">
    <property type="term" value="F:protein kinase activity"/>
    <property type="evidence" value="ECO:0000315"/>
    <property type="project" value="UniProtKB"/>
</dbReference>
<dbReference type="GO" id="GO:0019901">
    <property type="term" value="F:protein kinase binding"/>
    <property type="evidence" value="ECO:0000353"/>
    <property type="project" value="UniProtKB"/>
</dbReference>
<dbReference type="GO" id="GO:0106310">
    <property type="term" value="F:protein serine kinase activity"/>
    <property type="evidence" value="ECO:0007669"/>
    <property type="project" value="RHEA"/>
</dbReference>
<dbReference type="GO" id="GO:0004674">
    <property type="term" value="F:protein serine/threonine kinase activity"/>
    <property type="evidence" value="ECO:0007669"/>
    <property type="project" value="UniProtKB-KW"/>
</dbReference>
<dbReference type="GO" id="GO:0051087">
    <property type="term" value="F:protein-folding chaperone binding"/>
    <property type="evidence" value="ECO:0000353"/>
    <property type="project" value="UniProtKB"/>
</dbReference>
<dbReference type="GO" id="GO:0008270">
    <property type="term" value="F:zinc ion binding"/>
    <property type="evidence" value="ECO:0007669"/>
    <property type="project" value="UniProtKB-KW"/>
</dbReference>
<dbReference type="GO" id="GO:0043410">
    <property type="term" value="P:positive regulation of MAPK cascade"/>
    <property type="evidence" value="ECO:0000314"/>
    <property type="project" value="MGI"/>
</dbReference>
<dbReference type="GO" id="GO:0007265">
    <property type="term" value="P:Ras protein signal transduction"/>
    <property type="evidence" value="ECO:0000315"/>
    <property type="project" value="UniProtKB"/>
</dbReference>
<dbReference type="GO" id="GO:0042127">
    <property type="term" value="P:regulation of cell population proliferation"/>
    <property type="evidence" value="ECO:0000315"/>
    <property type="project" value="UniProtKB"/>
</dbReference>
<dbReference type="GO" id="GO:0043405">
    <property type="term" value="P:regulation of MAP kinase activity"/>
    <property type="evidence" value="ECO:0000315"/>
    <property type="project" value="UniProtKB"/>
</dbReference>
<dbReference type="CDD" id="cd20872">
    <property type="entry name" value="C1_KSR1"/>
    <property type="match status" value="1"/>
</dbReference>
<dbReference type="CDD" id="cd14152">
    <property type="entry name" value="STKc_KSR1"/>
    <property type="match status" value="1"/>
</dbReference>
<dbReference type="FunFam" id="3.30.200.20:FF:000034">
    <property type="entry name" value="Kinase suppressor of Ras 1"/>
    <property type="match status" value="1"/>
</dbReference>
<dbReference type="FunFam" id="1.10.510.10:FF:000107">
    <property type="entry name" value="kinase suppressor of Ras 1"/>
    <property type="match status" value="1"/>
</dbReference>
<dbReference type="FunFam" id="1.10.150.50:FF:000031">
    <property type="entry name" value="Kinase suppressor of Ras 2"/>
    <property type="match status" value="1"/>
</dbReference>
<dbReference type="FunFam" id="3.30.60.20:FF:000010">
    <property type="entry name" value="Putative kinase suppressor of Ras 1"/>
    <property type="match status" value="1"/>
</dbReference>
<dbReference type="Gene3D" id="3.30.60.20">
    <property type="match status" value="1"/>
</dbReference>
<dbReference type="Gene3D" id="6.10.140.1120">
    <property type="match status" value="1"/>
</dbReference>
<dbReference type="Gene3D" id="3.30.200.20">
    <property type="entry name" value="Phosphorylase Kinase, domain 1"/>
    <property type="match status" value="1"/>
</dbReference>
<dbReference type="Gene3D" id="1.10.150.50">
    <property type="entry name" value="Transcription Factor, Ets-1"/>
    <property type="match status" value="1"/>
</dbReference>
<dbReference type="Gene3D" id="1.10.510.10">
    <property type="entry name" value="Transferase(Phosphotransferase) domain 1"/>
    <property type="match status" value="1"/>
</dbReference>
<dbReference type="InterPro" id="IPR046349">
    <property type="entry name" value="C1-like_sf"/>
</dbReference>
<dbReference type="InterPro" id="IPR011009">
    <property type="entry name" value="Kinase-like_dom_sf"/>
</dbReference>
<dbReference type="InterPro" id="IPR002219">
    <property type="entry name" value="PE/DAG-bd"/>
</dbReference>
<dbReference type="InterPro" id="IPR000719">
    <property type="entry name" value="Prot_kinase_dom"/>
</dbReference>
<dbReference type="InterPro" id="IPR013761">
    <property type="entry name" value="SAM/pointed_sf"/>
</dbReference>
<dbReference type="InterPro" id="IPR046861">
    <property type="entry name" value="SAM_KSR1_N"/>
</dbReference>
<dbReference type="InterPro" id="IPR046933">
    <property type="entry name" value="SAM_KSR1_N_sf"/>
</dbReference>
<dbReference type="InterPro" id="IPR001245">
    <property type="entry name" value="Ser-Thr/Tyr_kinase_cat_dom"/>
</dbReference>
<dbReference type="InterPro" id="IPR008271">
    <property type="entry name" value="Ser/Thr_kinase_AS"/>
</dbReference>
<dbReference type="InterPro" id="IPR050167">
    <property type="entry name" value="Ser_Thr_protein_kinase"/>
</dbReference>
<dbReference type="PANTHER" id="PTHR23257:SF716">
    <property type="entry name" value="KINASE SUPPRESSOR OF RAS 1"/>
    <property type="match status" value="1"/>
</dbReference>
<dbReference type="PANTHER" id="PTHR23257">
    <property type="entry name" value="SERINE-THREONINE PROTEIN KINASE"/>
    <property type="match status" value="1"/>
</dbReference>
<dbReference type="Pfam" id="PF07714">
    <property type="entry name" value="PK_Tyr_Ser-Thr"/>
    <property type="match status" value="1"/>
</dbReference>
<dbReference type="Pfam" id="PF20406">
    <property type="entry name" value="SAM_KSR1_N"/>
    <property type="match status" value="1"/>
</dbReference>
<dbReference type="SMART" id="SM00109">
    <property type="entry name" value="C1"/>
    <property type="match status" value="1"/>
</dbReference>
<dbReference type="SMART" id="SM00220">
    <property type="entry name" value="S_TKc"/>
    <property type="match status" value="1"/>
</dbReference>
<dbReference type="SUPFAM" id="SSF57889">
    <property type="entry name" value="Cysteine-rich domain"/>
    <property type="match status" value="1"/>
</dbReference>
<dbReference type="SUPFAM" id="SSF56112">
    <property type="entry name" value="Protein kinase-like (PK-like)"/>
    <property type="match status" value="1"/>
</dbReference>
<dbReference type="PROSITE" id="PS50011">
    <property type="entry name" value="PROTEIN_KINASE_DOM"/>
    <property type="match status" value="1"/>
</dbReference>
<dbReference type="PROSITE" id="PS00108">
    <property type="entry name" value="PROTEIN_KINASE_ST"/>
    <property type="match status" value="1"/>
</dbReference>
<dbReference type="PROSITE" id="PS00479">
    <property type="entry name" value="ZF_DAG_PE_1"/>
    <property type="match status" value="1"/>
</dbReference>
<dbReference type="PROSITE" id="PS50081">
    <property type="entry name" value="ZF_DAG_PE_2"/>
    <property type="match status" value="1"/>
</dbReference>
<evidence type="ECO:0000250" key="1">
    <source>
        <dbReference type="UniProtKB" id="Q6VAB6"/>
    </source>
</evidence>
<evidence type="ECO:0000250" key="2">
    <source>
        <dbReference type="UniProtKB" id="Q8IVT5"/>
    </source>
</evidence>
<evidence type="ECO:0000255" key="3"/>
<evidence type="ECO:0000255" key="4">
    <source>
        <dbReference type="PROSITE-ProRule" id="PRU00159"/>
    </source>
</evidence>
<evidence type="ECO:0000255" key="5">
    <source>
        <dbReference type="PROSITE-ProRule" id="PRU00226"/>
    </source>
</evidence>
<evidence type="ECO:0000255" key="6">
    <source>
        <dbReference type="PROSITE-ProRule" id="PRU10027"/>
    </source>
</evidence>
<evidence type="ECO:0000256" key="7">
    <source>
        <dbReference type="SAM" id="MobiDB-lite"/>
    </source>
</evidence>
<evidence type="ECO:0000269" key="8">
    <source>
    </source>
</evidence>
<evidence type="ECO:0000269" key="9">
    <source>
    </source>
</evidence>
<evidence type="ECO:0000269" key="10">
    <source>
    </source>
</evidence>
<evidence type="ECO:0000269" key="11">
    <source>
    </source>
</evidence>
<evidence type="ECO:0000269" key="12">
    <source>
    </source>
</evidence>
<evidence type="ECO:0000269" key="13">
    <source>
    </source>
</evidence>
<evidence type="ECO:0000269" key="14">
    <source>
    </source>
</evidence>
<evidence type="ECO:0000269" key="15">
    <source>
    </source>
</evidence>
<evidence type="ECO:0000269" key="16">
    <source>
    </source>
</evidence>
<evidence type="ECO:0000305" key="17"/>
<evidence type="ECO:0000305" key="18">
    <source>
    </source>
</evidence>
<evidence type="ECO:0007744" key="19">
    <source>
        <dbReference type="PDB" id="2LPE"/>
    </source>
</evidence>
<evidence type="ECO:0007744" key="20">
    <source>
    </source>
</evidence>
<evidence type="ECO:0007829" key="21">
    <source>
        <dbReference type="PDB" id="1KBE"/>
    </source>
</evidence>
<evidence type="ECO:0007829" key="22">
    <source>
        <dbReference type="PDB" id="2LPE"/>
    </source>
</evidence>
<proteinExistence type="evidence at protein level"/>